<evidence type="ECO:0000255" key="1">
    <source>
        <dbReference type="HAMAP-Rule" id="MF_00178"/>
    </source>
</evidence>
<name>RISB_BACC7</name>
<proteinExistence type="inferred from homology"/>
<keyword id="KW-0686">Riboflavin biosynthesis</keyword>
<keyword id="KW-0808">Transferase</keyword>
<gene>
    <name evidence="1" type="primary">ribH</name>
    <name type="ordered locus">BCAH187_A4246</name>
</gene>
<reference key="1">
    <citation type="submission" date="2008-10" db="EMBL/GenBank/DDBJ databases">
        <title>Genome sequence of Bacillus cereus AH187.</title>
        <authorList>
            <person name="Dodson R.J."/>
            <person name="Durkin A.S."/>
            <person name="Rosovitz M.J."/>
            <person name="Rasko D.A."/>
            <person name="Kolsto A.B."/>
            <person name="Okstad O.A."/>
            <person name="Ravel J."/>
            <person name="Sutton G."/>
        </authorList>
    </citation>
    <scope>NUCLEOTIDE SEQUENCE [LARGE SCALE GENOMIC DNA]</scope>
    <source>
        <strain>AH187</strain>
    </source>
</reference>
<comment type="function">
    <text evidence="1">Catalyzes the formation of 6,7-dimethyl-8-ribityllumazine by condensation of 5-amino-6-(D-ribitylamino)uracil with 3,4-dihydroxy-2-butanone 4-phosphate. This is the penultimate step in the biosynthesis of riboflavin.</text>
</comment>
<comment type="catalytic activity">
    <reaction evidence="1">
        <text>(2S)-2-hydroxy-3-oxobutyl phosphate + 5-amino-6-(D-ribitylamino)uracil = 6,7-dimethyl-8-(1-D-ribityl)lumazine + phosphate + 2 H2O + H(+)</text>
        <dbReference type="Rhea" id="RHEA:26152"/>
        <dbReference type="ChEBI" id="CHEBI:15377"/>
        <dbReference type="ChEBI" id="CHEBI:15378"/>
        <dbReference type="ChEBI" id="CHEBI:15934"/>
        <dbReference type="ChEBI" id="CHEBI:43474"/>
        <dbReference type="ChEBI" id="CHEBI:58201"/>
        <dbReference type="ChEBI" id="CHEBI:58830"/>
        <dbReference type="EC" id="2.5.1.78"/>
    </reaction>
</comment>
<comment type="pathway">
    <text evidence="1">Cofactor biosynthesis; riboflavin biosynthesis; riboflavin from 2-hydroxy-3-oxobutyl phosphate and 5-amino-6-(D-ribitylamino)uracil: step 1/2.</text>
</comment>
<comment type="subunit">
    <text evidence="1">Forms an icosahedral capsid composed of 60 subunits, arranged as a dodecamer of pentamers.</text>
</comment>
<comment type="similarity">
    <text evidence="1">Belongs to the DMRL synthase family.</text>
</comment>
<protein>
    <recommendedName>
        <fullName evidence="1">6,7-dimethyl-8-ribityllumazine synthase</fullName>
        <shortName evidence="1">DMRL synthase</shortName>
        <shortName evidence="1">LS</shortName>
        <shortName evidence="1">Lumazine synthase</shortName>
        <ecNumber evidence="1">2.5.1.78</ecNumber>
    </recommendedName>
</protein>
<dbReference type="EC" id="2.5.1.78" evidence="1"/>
<dbReference type="EMBL" id="CP001177">
    <property type="protein sequence ID" value="ACJ80208.1"/>
    <property type="molecule type" value="Genomic_DNA"/>
</dbReference>
<dbReference type="SMR" id="B7HNM9"/>
<dbReference type="KEGG" id="bcr:BCAH187_A4246"/>
<dbReference type="HOGENOM" id="CLU_089358_1_1_9"/>
<dbReference type="UniPathway" id="UPA00275">
    <property type="reaction ID" value="UER00404"/>
</dbReference>
<dbReference type="Proteomes" id="UP000002214">
    <property type="component" value="Chromosome"/>
</dbReference>
<dbReference type="GO" id="GO:0005829">
    <property type="term" value="C:cytosol"/>
    <property type="evidence" value="ECO:0007669"/>
    <property type="project" value="TreeGrafter"/>
</dbReference>
<dbReference type="GO" id="GO:0009349">
    <property type="term" value="C:riboflavin synthase complex"/>
    <property type="evidence" value="ECO:0007669"/>
    <property type="project" value="InterPro"/>
</dbReference>
<dbReference type="GO" id="GO:0000906">
    <property type="term" value="F:6,7-dimethyl-8-ribityllumazine synthase activity"/>
    <property type="evidence" value="ECO:0007669"/>
    <property type="project" value="UniProtKB-UniRule"/>
</dbReference>
<dbReference type="GO" id="GO:0009231">
    <property type="term" value="P:riboflavin biosynthetic process"/>
    <property type="evidence" value="ECO:0007669"/>
    <property type="project" value="UniProtKB-UniRule"/>
</dbReference>
<dbReference type="CDD" id="cd09209">
    <property type="entry name" value="Lumazine_synthase-I"/>
    <property type="match status" value="1"/>
</dbReference>
<dbReference type="FunFam" id="3.40.50.960:FF:000001">
    <property type="entry name" value="6,7-dimethyl-8-ribityllumazine synthase"/>
    <property type="match status" value="1"/>
</dbReference>
<dbReference type="Gene3D" id="3.40.50.960">
    <property type="entry name" value="Lumazine/riboflavin synthase"/>
    <property type="match status" value="1"/>
</dbReference>
<dbReference type="HAMAP" id="MF_00178">
    <property type="entry name" value="Lumazine_synth"/>
    <property type="match status" value="1"/>
</dbReference>
<dbReference type="InterPro" id="IPR034964">
    <property type="entry name" value="LS"/>
</dbReference>
<dbReference type="InterPro" id="IPR002180">
    <property type="entry name" value="LS/RS"/>
</dbReference>
<dbReference type="InterPro" id="IPR036467">
    <property type="entry name" value="LS/RS_sf"/>
</dbReference>
<dbReference type="NCBIfam" id="TIGR00114">
    <property type="entry name" value="lumazine-synth"/>
    <property type="match status" value="1"/>
</dbReference>
<dbReference type="NCBIfam" id="NF000812">
    <property type="entry name" value="PRK00061.1-4"/>
    <property type="match status" value="1"/>
</dbReference>
<dbReference type="PANTHER" id="PTHR21058:SF0">
    <property type="entry name" value="6,7-DIMETHYL-8-RIBITYLLUMAZINE SYNTHASE"/>
    <property type="match status" value="1"/>
</dbReference>
<dbReference type="PANTHER" id="PTHR21058">
    <property type="entry name" value="6,7-DIMETHYL-8-RIBITYLLUMAZINE SYNTHASE DMRL SYNTHASE LUMAZINE SYNTHASE"/>
    <property type="match status" value="1"/>
</dbReference>
<dbReference type="Pfam" id="PF00885">
    <property type="entry name" value="DMRL_synthase"/>
    <property type="match status" value="1"/>
</dbReference>
<dbReference type="SUPFAM" id="SSF52121">
    <property type="entry name" value="Lumazine synthase"/>
    <property type="match status" value="1"/>
</dbReference>
<sequence length="153" mass="16275">MVFEGHLVGTELKVGVVVGRFNEFITSKLLGGALDGLKRHGVEEADIDVAWVPGAFEIPLIAKKMANSGKYDAVITLGTVIRGATTHYDYVCNEVAKGVASLSLQTDIPVIFGVLTTETIEQAIERAGTKAGNKGYESAVAAIEMAHLSKQWA</sequence>
<feature type="chain" id="PRO_1000195458" description="6,7-dimethyl-8-ribityllumazine synthase">
    <location>
        <begin position="1"/>
        <end position="153"/>
    </location>
</feature>
<feature type="active site" description="Proton donor" evidence="1">
    <location>
        <position position="87"/>
    </location>
</feature>
<feature type="binding site" evidence="1">
    <location>
        <position position="21"/>
    </location>
    <ligand>
        <name>5-amino-6-(D-ribitylamino)uracil</name>
        <dbReference type="ChEBI" id="CHEBI:15934"/>
    </ligand>
</feature>
<feature type="binding site" evidence="1">
    <location>
        <begin position="55"/>
        <end position="57"/>
    </location>
    <ligand>
        <name>5-amino-6-(D-ribitylamino)uracil</name>
        <dbReference type="ChEBI" id="CHEBI:15934"/>
    </ligand>
</feature>
<feature type="binding site" evidence="1">
    <location>
        <begin position="79"/>
        <end position="81"/>
    </location>
    <ligand>
        <name>5-amino-6-(D-ribitylamino)uracil</name>
        <dbReference type="ChEBI" id="CHEBI:15934"/>
    </ligand>
</feature>
<feature type="binding site" evidence="1">
    <location>
        <begin position="84"/>
        <end position="85"/>
    </location>
    <ligand>
        <name>(2S)-2-hydroxy-3-oxobutyl phosphate</name>
        <dbReference type="ChEBI" id="CHEBI:58830"/>
    </ligand>
</feature>
<feature type="binding site" evidence="1">
    <location>
        <position position="112"/>
    </location>
    <ligand>
        <name>5-amino-6-(D-ribitylamino)uracil</name>
        <dbReference type="ChEBI" id="CHEBI:15934"/>
    </ligand>
</feature>
<feature type="binding site" evidence="1">
    <location>
        <position position="126"/>
    </location>
    <ligand>
        <name>(2S)-2-hydroxy-3-oxobutyl phosphate</name>
        <dbReference type="ChEBI" id="CHEBI:58830"/>
    </ligand>
</feature>
<accession>B7HNM9</accession>
<organism>
    <name type="scientific">Bacillus cereus (strain AH187)</name>
    <dbReference type="NCBI Taxonomy" id="405534"/>
    <lineage>
        <taxon>Bacteria</taxon>
        <taxon>Bacillati</taxon>
        <taxon>Bacillota</taxon>
        <taxon>Bacilli</taxon>
        <taxon>Bacillales</taxon>
        <taxon>Bacillaceae</taxon>
        <taxon>Bacillus</taxon>
        <taxon>Bacillus cereus group</taxon>
    </lineage>
</organism>